<comment type="function">
    <text evidence="1">Catalyzes the methylthiolation of an aspartic acid residue of ribosomal protein uS12.</text>
</comment>
<comment type="catalytic activity">
    <reaction evidence="1">
        <text>L-aspartate(89)-[ribosomal protein uS12]-hydrogen + (sulfur carrier)-SH + AH2 + 2 S-adenosyl-L-methionine = 3-methylsulfanyl-L-aspartate(89)-[ribosomal protein uS12]-hydrogen + (sulfur carrier)-H + 5'-deoxyadenosine + L-methionine + A + S-adenosyl-L-homocysteine + 2 H(+)</text>
        <dbReference type="Rhea" id="RHEA:37087"/>
        <dbReference type="Rhea" id="RHEA-COMP:10460"/>
        <dbReference type="Rhea" id="RHEA-COMP:10461"/>
        <dbReference type="Rhea" id="RHEA-COMP:14737"/>
        <dbReference type="Rhea" id="RHEA-COMP:14739"/>
        <dbReference type="ChEBI" id="CHEBI:13193"/>
        <dbReference type="ChEBI" id="CHEBI:15378"/>
        <dbReference type="ChEBI" id="CHEBI:17319"/>
        <dbReference type="ChEBI" id="CHEBI:17499"/>
        <dbReference type="ChEBI" id="CHEBI:29917"/>
        <dbReference type="ChEBI" id="CHEBI:29961"/>
        <dbReference type="ChEBI" id="CHEBI:57844"/>
        <dbReference type="ChEBI" id="CHEBI:57856"/>
        <dbReference type="ChEBI" id="CHEBI:59789"/>
        <dbReference type="ChEBI" id="CHEBI:64428"/>
        <dbReference type="ChEBI" id="CHEBI:73599"/>
        <dbReference type="EC" id="2.8.4.4"/>
    </reaction>
</comment>
<comment type="cofactor">
    <cofactor evidence="1">
        <name>[4Fe-4S] cluster</name>
        <dbReference type="ChEBI" id="CHEBI:49883"/>
    </cofactor>
    <text evidence="1">Binds 2 [4Fe-4S] clusters. One cluster is coordinated with 3 cysteines and an exchangeable S-adenosyl-L-methionine.</text>
</comment>
<comment type="subcellular location">
    <subcellularLocation>
        <location evidence="1">Cytoplasm</location>
    </subcellularLocation>
</comment>
<comment type="similarity">
    <text evidence="1">Belongs to the methylthiotransferase family. RimO subfamily.</text>
</comment>
<gene>
    <name evidence="1" type="primary">rimO</name>
    <name type="ordered locus">BTH_I2259</name>
</gene>
<evidence type="ECO:0000255" key="1">
    <source>
        <dbReference type="HAMAP-Rule" id="MF_01865"/>
    </source>
</evidence>
<evidence type="ECO:0000255" key="2">
    <source>
        <dbReference type="PROSITE-ProRule" id="PRU01266"/>
    </source>
</evidence>
<feature type="chain" id="PRO_0000374746" description="Ribosomal protein uS12 methylthiotransferase RimO">
    <location>
        <begin position="1"/>
        <end position="463"/>
    </location>
</feature>
<feature type="domain" description="MTTase N-terminal" evidence="1">
    <location>
        <begin position="15"/>
        <end position="130"/>
    </location>
</feature>
<feature type="domain" description="Radical SAM core" evidence="2">
    <location>
        <begin position="147"/>
        <end position="392"/>
    </location>
</feature>
<feature type="domain" description="TRAM" evidence="1">
    <location>
        <begin position="395"/>
        <end position="463"/>
    </location>
</feature>
<feature type="binding site" evidence="1">
    <location>
        <position position="24"/>
    </location>
    <ligand>
        <name>[4Fe-4S] cluster</name>
        <dbReference type="ChEBI" id="CHEBI:49883"/>
        <label>1</label>
    </ligand>
</feature>
<feature type="binding site" evidence="1">
    <location>
        <position position="60"/>
    </location>
    <ligand>
        <name>[4Fe-4S] cluster</name>
        <dbReference type="ChEBI" id="CHEBI:49883"/>
        <label>1</label>
    </ligand>
</feature>
<feature type="binding site" evidence="1">
    <location>
        <position position="89"/>
    </location>
    <ligand>
        <name>[4Fe-4S] cluster</name>
        <dbReference type="ChEBI" id="CHEBI:49883"/>
        <label>1</label>
    </ligand>
</feature>
<feature type="binding site" evidence="1">
    <location>
        <position position="161"/>
    </location>
    <ligand>
        <name>[4Fe-4S] cluster</name>
        <dbReference type="ChEBI" id="CHEBI:49883"/>
        <label>2</label>
        <note>4Fe-4S-S-AdoMet</note>
    </ligand>
</feature>
<feature type="binding site" evidence="1">
    <location>
        <position position="165"/>
    </location>
    <ligand>
        <name>[4Fe-4S] cluster</name>
        <dbReference type="ChEBI" id="CHEBI:49883"/>
        <label>2</label>
        <note>4Fe-4S-S-AdoMet</note>
    </ligand>
</feature>
<feature type="binding site" evidence="1">
    <location>
        <position position="168"/>
    </location>
    <ligand>
        <name>[4Fe-4S] cluster</name>
        <dbReference type="ChEBI" id="CHEBI:49883"/>
        <label>2</label>
        <note>4Fe-4S-S-AdoMet</note>
    </ligand>
</feature>
<proteinExistence type="inferred from homology"/>
<keyword id="KW-0004">4Fe-4S</keyword>
<keyword id="KW-0963">Cytoplasm</keyword>
<keyword id="KW-0408">Iron</keyword>
<keyword id="KW-0411">Iron-sulfur</keyword>
<keyword id="KW-0479">Metal-binding</keyword>
<keyword id="KW-0949">S-adenosyl-L-methionine</keyword>
<keyword id="KW-0808">Transferase</keyword>
<protein>
    <recommendedName>
        <fullName evidence="1">Ribosomal protein uS12 methylthiotransferase RimO</fullName>
        <shortName evidence="1">uS12 MTTase</shortName>
        <shortName evidence="1">uS12 methylthiotransferase</shortName>
        <ecNumber evidence="1">2.8.4.4</ecNumber>
    </recommendedName>
    <alternativeName>
        <fullName evidence="1">Ribosomal protein uS12 (aspartate-C(3))-methylthiotransferase</fullName>
    </alternativeName>
    <alternativeName>
        <fullName evidence="1">Ribosome maturation factor RimO</fullName>
    </alternativeName>
</protein>
<organism>
    <name type="scientific">Burkholderia thailandensis (strain ATCC 700388 / DSM 13276 / CCUG 48851 / CIP 106301 / E264)</name>
    <dbReference type="NCBI Taxonomy" id="271848"/>
    <lineage>
        <taxon>Bacteria</taxon>
        <taxon>Pseudomonadati</taxon>
        <taxon>Pseudomonadota</taxon>
        <taxon>Betaproteobacteria</taxon>
        <taxon>Burkholderiales</taxon>
        <taxon>Burkholderiaceae</taxon>
        <taxon>Burkholderia</taxon>
        <taxon>pseudomallei group</taxon>
    </lineage>
</organism>
<dbReference type="EC" id="2.8.4.4" evidence="1"/>
<dbReference type="EMBL" id="CP000086">
    <property type="protein sequence ID" value="ABC38260.1"/>
    <property type="molecule type" value="Genomic_DNA"/>
</dbReference>
<dbReference type="SMR" id="Q2SWB9"/>
<dbReference type="KEGG" id="bte:BTH_I2259"/>
<dbReference type="HOGENOM" id="CLU_018697_0_0_4"/>
<dbReference type="Proteomes" id="UP000001930">
    <property type="component" value="Chromosome I"/>
</dbReference>
<dbReference type="GO" id="GO:0005829">
    <property type="term" value="C:cytosol"/>
    <property type="evidence" value="ECO:0007669"/>
    <property type="project" value="TreeGrafter"/>
</dbReference>
<dbReference type="GO" id="GO:0051539">
    <property type="term" value="F:4 iron, 4 sulfur cluster binding"/>
    <property type="evidence" value="ECO:0007669"/>
    <property type="project" value="UniProtKB-UniRule"/>
</dbReference>
<dbReference type="GO" id="GO:0035599">
    <property type="term" value="F:aspartic acid methylthiotransferase activity"/>
    <property type="evidence" value="ECO:0007669"/>
    <property type="project" value="TreeGrafter"/>
</dbReference>
<dbReference type="GO" id="GO:0046872">
    <property type="term" value="F:metal ion binding"/>
    <property type="evidence" value="ECO:0007669"/>
    <property type="project" value="UniProtKB-KW"/>
</dbReference>
<dbReference type="GO" id="GO:0103039">
    <property type="term" value="F:protein methylthiotransferase activity"/>
    <property type="evidence" value="ECO:0007669"/>
    <property type="project" value="UniProtKB-EC"/>
</dbReference>
<dbReference type="GO" id="GO:0006400">
    <property type="term" value="P:tRNA modification"/>
    <property type="evidence" value="ECO:0007669"/>
    <property type="project" value="InterPro"/>
</dbReference>
<dbReference type="CDD" id="cd01335">
    <property type="entry name" value="Radical_SAM"/>
    <property type="match status" value="1"/>
</dbReference>
<dbReference type="FunFam" id="2.40.50.140:FF:000210">
    <property type="entry name" value="Ribosomal protein S12 methylthiotransferase RimO"/>
    <property type="match status" value="1"/>
</dbReference>
<dbReference type="FunFam" id="3.40.50.12160:FF:000002">
    <property type="entry name" value="Ribosomal protein S12 methylthiotransferase RimO"/>
    <property type="match status" value="1"/>
</dbReference>
<dbReference type="FunFam" id="3.80.30.20:FF:000001">
    <property type="entry name" value="tRNA-2-methylthio-N(6)-dimethylallyladenosine synthase 2"/>
    <property type="match status" value="1"/>
</dbReference>
<dbReference type="Gene3D" id="3.40.50.12160">
    <property type="entry name" value="Methylthiotransferase, N-terminal domain"/>
    <property type="match status" value="1"/>
</dbReference>
<dbReference type="Gene3D" id="2.40.50.140">
    <property type="entry name" value="Nucleic acid-binding proteins"/>
    <property type="match status" value="1"/>
</dbReference>
<dbReference type="Gene3D" id="3.80.30.20">
    <property type="entry name" value="tm_1862 like domain"/>
    <property type="match status" value="1"/>
</dbReference>
<dbReference type="HAMAP" id="MF_01865">
    <property type="entry name" value="MTTase_RimO"/>
    <property type="match status" value="1"/>
</dbReference>
<dbReference type="InterPro" id="IPR006638">
    <property type="entry name" value="Elp3/MiaA/NifB-like_rSAM"/>
</dbReference>
<dbReference type="InterPro" id="IPR005839">
    <property type="entry name" value="Methylthiotransferase"/>
</dbReference>
<dbReference type="InterPro" id="IPR020612">
    <property type="entry name" value="Methylthiotransferase_CS"/>
</dbReference>
<dbReference type="InterPro" id="IPR013848">
    <property type="entry name" value="Methylthiotransferase_N"/>
</dbReference>
<dbReference type="InterPro" id="IPR038135">
    <property type="entry name" value="Methylthiotransferase_N_sf"/>
</dbReference>
<dbReference type="InterPro" id="IPR012340">
    <property type="entry name" value="NA-bd_OB-fold"/>
</dbReference>
<dbReference type="InterPro" id="IPR005840">
    <property type="entry name" value="Ribosomal_uS12_MeSTrfase_RimO"/>
</dbReference>
<dbReference type="InterPro" id="IPR007197">
    <property type="entry name" value="rSAM"/>
</dbReference>
<dbReference type="InterPro" id="IPR023404">
    <property type="entry name" value="rSAM_horseshoe"/>
</dbReference>
<dbReference type="InterPro" id="IPR002792">
    <property type="entry name" value="TRAM_dom"/>
</dbReference>
<dbReference type="NCBIfam" id="TIGR01125">
    <property type="entry name" value="30S ribosomal protein S12 methylthiotransferase RimO"/>
    <property type="match status" value="1"/>
</dbReference>
<dbReference type="NCBIfam" id="TIGR00089">
    <property type="entry name" value="MiaB/RimO family radical SAM methylthiotransferase"/>
    <property type="match status" value="1"/>
</dbReference>
<dbReference type="PANTHER" id="PTHR43837">
    <property type="entry name" value="RIBOSOMAL PROTEIN S12 METHYLTHIOTRANSFERASE RIMO"/>
    <property type="match status" value="1"/>
</dbReference>
<dbReference type="PANTHER" id="PTHR43837:SF1">
    <property type="entry name" value="RIBOSOMAL PROTEIN US12 METHYLTHIOTRANSFERASE RIMO"/>
    <property type="match status" value="1"/>
</dbReference>
<dbReference type="Pfam" id="PF04055">
    <property type="entry name" value="Radical_SAM"/>
    <property type="match status" value="1"/>
</dbReference>
<dbReference type="Pfam" id="PF18693">
    <property type="entry name" value="TRAM_2"/>
    <property type="match status" value="1"/>
</dbReference>
<dbReference type="Pfam" id="PF00919">
    <property type="entry name" value="UPF0004"/>
    <property type="match status" value="1"/>
</dbReference>
<dbReference type="SFLD" id="SFLDG01082">
    <property type="entry name" value="B12-binding_domain_containing"/>
    <property type="match status" value="1"/>
</dbReference>
<dbReference type="SFLD" id="SFLDG01061">
    <property type="entry name" value="methylthiotransferase"/>
    <property type="match status" value="1"/>
</dbReference>
<dbReference type="SFLD" id="SFLDF00274">
    <property type="entry name" value="ribosomal_protein_S12_methylth"/>
    <property type="match status" value="1"/>
</dbReference>
<dbReference type="SMART" id="SM00729">
    <property type="entry name" value="Elp3"/>
    <property type="match status" value="1"/>
</dbReference>
<dbReference type="SUPFAM" id="SSF102114">
    <property type="entry name" value="Radical SAM enzymes"/>
    <property type="match status" value="1"/>
</dbReference>
<dbReference type="PROSITE" id="PS51449">
    <property type="entry name" value="MTTASE_N"/>
    <property type="match status" value="1"/>
</dbReference>
<dbReference type="PROSITE" id="PS01278">
    <property type="entry name" value="MTTASE_RADICAL"/>
    <property type="match status" value="1"/>
</dbReference>
<dbReference type="PROSITE" id="PS51918">
    <property type="entry name" value="RADICAL_SAM"/>
    <property type="match status" value="1"/>
</dbReference>
<dbReference type="PROSITE" id="PS50926">
    <property type="entry name" value="TRAM"/>
    <property type="match status" value="1"/>
</dbReference>
<sequence length="463" mass="50349">MENSLKSSGKPPAAPKVGMVSLGCPKALVDSEQIITQLRAEGYEISGTYDGADLVVVNTCGFIDEAVQESLDAIGEALAENGKVIVTGCLGAKKSASGSGLIEEVHPKVLAVTGPHAVGEVMQVVHSHLPKPHDPFVDLVPAAGIKLTPRHYAYLKISEGCNHRCSFCIIPSMRGDLVSRPVAEVMLEAENLFKAGVKELLVISQDTSAYGVDVKYRTGFWNGRPLKTRMTELVGALGELAAQYGAWVRLHYVYPYPHVDEIIPMMAQGPLKGHVLPYLDVPFQHAHPDVLKRMKRPANAEKVLERVQRWREICPDLTIRSTFIAGFPGETEAQFETLLDFIREAELDRVGCFAYSPVEGASANELDGALPDDVREARRARFMEVAEEVSAARIERKVGKTLKVLIDEVNEEGGIGRTAADAPEIDGVVYVEPAAKASKRYKVGDFVSVKITGADGHDLWGEV</sequence>
<reference key="1">
    <citation type="journal article" date="2005" name="BMC Genomics">
        <title>Bacterial genome adaptation to niches: divergence of the potential virulence genes in three Burkholderia species of different survival strategies.</title>
        <authorList>
            <person name="Kim H.S."/>
            <person name="Schell M.A."/>
            <person name="Yu Y."/>
            <person name="Ulrich R.L."/>
            <person name="Sarria S.H."/>
            <person name="Nierman W.C."/>
            <person name="DeShazer D."/>
        </authorList>
    </citation>
    <scope>NUCLEOTIDE SEQUENCE [LARGE SCALE GENOMIC DNA]</scope>
    <source>
        <strain>ATCC 700388 / DSM 13276 / CCUG 48851 / CIP 106301 / E264</strain>
    </source>
</reference>
<name>RIMO_BURTA</name>
<accession>Q2SWB9</accession>